<reference key="1">
    <citation type="journal article" date="2003" name="Proc. Natl. Acad. Sci. U.S.A.">
        <title>The complete genome sequence of the Arabidopsis and tomato pathogen Pseudomonas syringae pv. tomato DC3000.</title>
        <authorList>
            <person name="Buell C.R."/>
            <person name="Joardar V."/>
            <person name="Lindeberg M."/>
            <person name="Selengut J."/>
            <person name="Paulsen I.T."/>
            <person name="Gwinn M.L."/>
            <person name="Dodson R.J."/>
            <person name="DeBoy R.T."/>
            <person name="Durkin A.S."/>
            <person name="Kolonay J.F."/>
            <person name="Madupu R."/>
            <person name="Daugherty S.C."/>
            <person name="Brinkac L.M."/>
            <person name="Beanan M.J."/>
            <person name="Haft D.H."/>
            <person name="Nelson W.C."/>
            <person name="Davidsen T.M."/>
            <person name="Zafar N."/>
            <person name="Zhou L."/>
            <person name="Liu J."/>
            <person name="Yuan Q."/>
            <person name="Khouri H.M."/>
            <person name="Fedorova N.B."/>
            <person name="Tran B."/>
            <person name="Russell D."/>
            <person name="Berry K.J."/>
            <person name="Utterback T.R."/>
            <person name="Van Aken S.E."/>
            <person name="Feldblyum T.V."/>
            <person name="D'Ascenzo M."/>
            <person name="Deng W.-L."/>
            <person name="Ramos A.R."/>
            <person name="Alfano J.R."/>
            <person name="Cartinhour S."/>
            <person name="Chatterjee A.K."/>
            <person name="Delaney T.P."/>
            <person name="Lazarowitz S.G."/>
            <person name="Martin G.B."/>
            <person name="Schneider D.J."/>
            <person name="Tang X."/>
            <person name="Bender C.L."/>
            <person name="White O."/>
            <person name="Fraser C.M."/>
            <person name="Collmer A."/>
        </authorList>
    </citation>
    <scope>NUCLEOTIDE SEQUENCE [LARGE SCALE GENOMIC DNA]</scope>
    <source>
        <strain>ATCC BAA-871 / DC3000</strain>
    </source>
</reference>
<organism>
    <name type="scientific">Pseudomonas syringae pv. tomato (strain ATCC BAA-871 / DC3000)</name>
    <dbReference type="NCBI Taxonomy" id="223283"/>
    <lineage>
        <taxon>Bacteria</taxon>
        <taxon>Pseudomonadati</taxon>
        <taxon>Pseudomonadota</taxon>
        <taxon>Gammaproteobacteria</taxon>
        <taxon>Pseudomonadales</taxon>
        <taxon>Pseudomonadaceae</taxon>
        <taxon>Pseudomonas</taxon>
    </lineage>
</organism>
<name>KDGD_PSESM</name>
<comment type="catalytic activity">
    <reaction evidence="1">
        <text>5-dehydro-4-deoxy-D-glucarate + H(+) = 2,5-dioxopentanoate + CO2 + H2O</text>
        <dbReference type="Rhea" id="RHEA:24608"/>
        <dbReference type="ChEBI" id="CHEBI:15377"/>
        <dbReference type="ChEBI" id="CHEBI:15378"/>
        <dbReference type="ChEBI" id="CHEBI:16526"/>
        <dbReference type="ChEBI" id="CHEBI:42819"/>
        <dbReference type="ChEBI" id="CHEBI:58136"/>
        <dbReference type="EC" id="4.2.1.41"/>
    </reaction>
</comment>
<comment type="pathway">
    <text evidence="1">Carbohydrate acid metabolism; D-glucarate degradation; 2,5-dioxopentanoate from D-glucarate: step 2/2.</text>
</comment>
<comment type="similarity">
    <text evidence="1">Belongs to the DapA family.</text>
</comment>
<proteinExistence type="inferred from homology"/>
<feature type="chain" id="PRO_0000103236" description="Probable 5-dehydro-4-deoxyglucarate dehydratase">
    <location>
        <begin position="1"/>
        <end position="303"/>
    </location>
</feature>
<accession>Q87WJ7</accession>
<protein>
    <recommendedName>
        <fullName evidence="1">Probable 5-dehydro-4-deoxyglucarate dehydratase</fullName>
        <ecNumber evidence="1">4.2.1.41</ecNumber>
    </recommendedName>
    <alternativeName>
        <fullName evidence="1">5-keto-4-deoxy-glucarate dehydratase</fullName>
        <shortName evidence="1">KDGDH</shortName>
    </alternativeName>
</protein>
<evidence type="ECO:0000255" key="1">
    <source>
        <dbReference type="HAMAP-Rule" id="MF_00694"/>
    </source>
</evidence>
<sequence length="303" mass="32713">MNPQELKSILSSGLLSFPVTDFNAQGDFHRAGYIKRLEWLAPYGASALFAAGGTGEFFSLAASEYSEIIKTAVDTCATSVPILAGVGGATRQAIEYAQEAERLGAKGLLLLPHYLTEASQDGVAAHVEAVCKSVKIGVVVYNRNVCRLTPTLLEQLAERCPNLIGYKDGLGDIELMVSIRRRLGDRFSYLGGLPTAEVYAAAYKALGVPVYSSAVFNFVPKLAMDFYHAIARDDHEAVGKYIDDFFLPYLEIRNRKAGYAVSIVKAGAKIAGYDAGPVRAPLTDLTPDECDMLAALMDKQGKQ</sequence>
<keyword id="KW-0456">Lyase</keyword>
<keyword id="KW-1185">Reference proteome</keyword>
<dbReference type="EC" id="4.2.1.41" evidence="1"/>
<dbReference type="EMBL" id="AE016853">
    <property type="protein sequence ID" value="AAO57997.1"/>
    <property type="molecule type" value="Genomic_DNA"/>
</dbReference>
<dbReference type="RefSeq" id="NP_794302.1">
    <property type="nucleotide sequence ID" value="NC_004578.1"/>
</dbReference>
<dbReference type="SMR" id="Q87WJ7"/>
<dbReference type="STRING" id="223283.PSPTO_4549"/>
<dbReference type="KEGG" id="pst:PSPTO_4549"/>
<dbReference type="PATRIC" id="fig|223283.9.peg.4667"/>
<dbReference type="eggNOG" id="COG0329">
    <property type="taxonomic scope" value="Bacteria"/>
</dbReference>
<dbReference type="HOGENOM" id="CLU_049343_5_2_6"/>
<dbReference type="OrthoDB" id="8995637at2"/>
<dbReference type="PhylomeDB" id="Q87WJ7"/>
<dbReference type="UniPathway" id="UPA00564">
    <property type="reaction ID" value="UER00628"/>
</dbReference>
<dbReference type="Proteomes" id="UP000002515">
    <property type="component" value="Chromosome"/>
</dbReference>
<dbReference type="GO" id="GO:0008840">
    <property type="term" value="F:4-hydroxy-tetrahydrodipicolinate synthase activity"/>
    <property type="evidence" value="ECO:0007669"/>
    <property type="project" value="TreeGrafter"/>
</dbReference>
<dbReference type="GO" id="GO:0047448">
    <property type="term" value="F:5-dehydro-4-deoxyglucarate dehydratase activity"/>
    <property type="evidence" value="ECO:0007669"/>
    <property type="project" value="UniProtKB-UniRule"/>
</dbReference>
<dbReference type="GO" id="GO:0042838">
    <property type="term" value="P:D-glucarate catabolic process"/>
    <property type="evidence" value="ECO:0007669"/>
    <property type="project" value="UniProtKB-UniRule"/>
</dbReference>
<dbReference type="CDD" id="cd00951">
    <property type="entry name" value="KDGDH"/>
    <property type="match status" value="1"/>
</dbReference>
<dbReference type="Gene3D" id="3.20.20.70">
    <property type="entry name" value="Aldolase class I"/>
    <property type="match status" value="1"/>
</dbReference>
<dbReference type="HAMAP" id="MF_00694">
    <property type="entry name" value="KDGDH"/>
    <property type="match status" value="1"/>
</dbReference>
<dbReference type="InterPro" id="IPR013785">
    <property type="entry name" value="Aldolase_TIM"/>
</dbReference>
<dbReference type="InterPro" id="IPR002220">
    <property type="entry name" value="DapA-like"/>
</dbReference>
<dbReference type="InterPro" id="IPR017655">
    <property type="entry name" value="Dehydro-deoxyglucarate_dehyd"/>
</dbReference>
<dbReference type="NCBIfam" id="TIGR03249">
    <property type="entry name" value="KdgD"/>
    <property type="match status" value="1"/>
</dbReference>
<dbReference type="NCBIfam" id="NF002958">
    <property type="entry name" value="PRK03620.1"/>
    <property type="match status" value="1"/>
</dbReference>
<dbReference type="PANTHER" id="PTHR12128:SF19">
    <property type="entry name" value="5-DEHYDRO-4-DEOXYGLUCARATE DEHYDRATASE 2-RELATED"/>
    <property type="match status" value="1"/>
</dbReference>
<dbReference type="PANTHER" id="PTHR12128">
    <property type="entry name" value="DIHYDRODIPICOLINATE SYNTHASE"/>
    <property type="match status" value="1"/>
</dbReference>
<dbReference type="Pfam" id="PF00701">
    <property type="entry name" value="DHDPS"/>
    <property type="match status" value="1"/>
</dbReference>
<dbReference type="PIRSF" id="PIRSF001365">
    <property type="entry name" value="DHDPS"/>
    <property type="match status" value="1"/>
</dbReference>
<dbReference type="SMART" id="SM01130">
    <property type="entry name" value="DHDPS"/>
    <property type="match status" value="1"/>
</dbReference>
<dbReference type="SUPFAM" id="SSF51569">
    <property type="entry name" value="Aldolase"/>
    <property type="match status" value="1"/>
</dbReference>
<gene>
    <name type="ordered locus">PSPTO_4549</name>
</gene>